<gene>
    <name evidence="1" type="primary">arnT1</name>
    <name type="ordered locus">PMI0275</name>
</gene>
<feature type="chain" id="PRO_0000380013" description="Undecaprenyl phosphate-alpha-4-amino-4-deoxy-L-arabinose arabinosyl transferase 1">
    <location>
        <begin position="1"/>
        <end position="548"/>
    </location>
</feature>
<feature type="transmembrane region" description="Helical" evidence="1">
    <location>
        <begin position="11"/>
        <end position="31"/>
    </location>
</feature>
<feature type="transmembrane region" description="Helical" evidence="1">
    <location>
        <begin position="89"/>
        <end position="109"/>
    </location>
</feature>
<feature type="transmembrane region" description="Helical" evidence="1">
    <location>
        <begin position="114"/>
        <end position="134"/>
    </location>
</feature>
<feature type="transmembrane region" description="Helical" evidence="1">
    <location>
        <begin position="137"/>
        <end position="157"/>
    </location>
</feature>
<feature type="transmembrane region" description="Helical" evidence="1">
    <location>
        <begin position="180"/>
        <end position="200"/>
    </location>
</feature>
<feature type="transmembrane region" description="Helical" evidence="1">
    <location>
        <begin position="214"/>
        <end position="234"/>
    </location>
</feature>
<feature type="transmembrane region" description="Helical" evidence="1">
    <location>
        <begin position="263"/>
        <end position="283"/>
    </location>
</feature>
<feature type="transmembrane region" description="Helical" evidence="1">
    <location>
        <begin position="292"/>
        <end position="312"/>
    </location>
</feature>
<feature type="transmembrane region" description="Helical" evidence="1">
    <location>
        <begin position="314"/>
        <end position="334"/>
    </location>
</feature>
<feature type="transmembrane region" description="Helical" evidence="1">
    <location>
        <begin position="347"/>
        <end position="367"/>
    </location>
</feature>
<feature type="transmembrane region" description="Helical" evidence="1">
    <location>
        <begin position="382"/>
        <end position="402"/>
    </location>
</feature>
<feature type="transmembrane region" description="Helical" evidence="1">
    <location>
        <begin position="405"/>
        <end position="425"/>
    </location>
</feature>
<evidence type="ECO:0000255" key="1">
    <source>
        <dbReference type="HAMAP-Rule" id="MF_01165"/>
    </source>
</evidence>
<sequence length="548" mass="62263">MNIAMTERYKWLLFFLFILLTYFIPLETRLLWQPDEIRYAEISREMLVSGNWSVPYLLDIRYFEKPVLGYWINCIAQWLFGESHFAVRIVVVTSTLLTGWLIYKAAMVVWRNSALAFNAMTVFLSSFLVLAIGTYNILDPIVTLFVTAAMYSFLVALSTPNKKGKIIAYMGIGFFCALGFLTKGFIAVVLPALVFLVMAISQARFKEVVCYSSIALLALAITAGPWVITVALQAPDYWNYFFWVEHVQRFIAKESARSQPTWFYIPIVILGVLPWLGFLFGALKSAFSLKKGTLYFLLWFTLFFAFFSASKGKLLTYMLPCFVPLSILIAHYIEELKDRPDEKISKVNASINIAFGLMGISAVIYSLYSAKFALYDTNETLKIVLAISGFLFWSVIGAGALFRQTQFLTMFCSIGLSLVIGYAIPEKIESRSTPENIIQRYYEPLSNKSYLLTDEVGIGTSLAWGLKRTDIRLTETKGELAYGLNYPDVKNKYYSLEQLLALIEANQYKGVAIVLVRPDRKQILTKLTTLKEKPIVEKEGDLTLVFFN</sequence>
<accession>B4EUL1</accession>
<proteinExistence type="inferred from homology"/>
<organism>
    <name type="scientific">Proteus mirabilis (strain HI4320)</name>
    <dbReference type="NCBI Taxonomy" id="529507"/>
    <lineage>
        <taxon>Bacteria</taxon>
        <taxon>Pseudomonadati</taxon>
        <taxon>Pseudomonadota</taxon>
        <taxon>Gammaproteobacteria</taxon>
        <taxon>Enterobacterales</taxon>
        <taxon>Morganellaceae</taxon>
        <taxon>Proteus</taxon>
    </lineage>
</organism>
<keyword id="KW-0997">Cell inner membrane</keyword>
<keyword id="KW-1003">Cell membrane</keyword>
<keyword id="KW-0328">Glycosyltransferase</keyword>
<keyword id="KW-0441">Lipid A biosynthesis</keyword>
<keyword id="KW-0444">Lipid biosynthesis</keyword>
<keyword id="KW-0443">Lipid metabolism</keyword>
<keyword id="KW-0448">Lipopolysaccharide biosynthesis</keyword>
<keyword id="KW-0472">Membrane</keyword>
<keyword id="KW-1185">Reference proteome</keyword>
<keyword id="KW-0808">Transferase</keyword>
<keyword id="KW-0812">Transmembrane</keyword>
<keyword id="KW-1133">Transmembrane helix</keyword>
<protein>
    <recommendedName>
        <fullName evidence="1">Undecaprenyl phosphate-alpha-4-amino-4-deoxy-L-arabinose arabinosyl transferase 1</fullName>
        <ecNumber evidence="1">2.4.2.43</ecNumber>
    </recommendedName>
    <alternativeName>
        <fullName evidence="1">4-amino-4-deoxy-L-arabinose lipid A transferase 1</fullName>
    </alternativeName>
    <alternativeName>
        <fullName evidence="1">Lipid IV(A) 4-amino-4-deoxy-L-arabinosyltransferase</fullName>
    </alternativeName>
    <alternativeName>
        <fullName evidence="1">Undecaprenyl phosphate-alpha-L-Ara4N transferase 1</fullName>
    </alternativeName>
</protein>
<dbReference type="EC" id="2.4.2.43" evidence="1"/>
<dbReference type="EMBL" id="AM942759">
    <property type="protein sequence ID" value="CAR40745.1"/>
    <property type="molecule type" value="Genomic_DNA"/>
</dbReference>
<dbReference type="RefSeq" id="WP_012367533.1">
    <property type="nucleotide sequence ID" value="NC_010554.1"/>
</dbReference>
<dbReference type="SMR" id="B4EUL1"/>
<dbReference type="CAZy" id="GT83">
    <property type="family name" value="Glycosyltransferase Family 83"/>
</dbReference>
<dbReference type="EnsemblBacteria" id="CAR40745">
    <property type="protein sequence ID" value="CAR40745"/>
    <property type="gene ID" value="PMI0275"/>
</dbReference>
<dbReference type="GeneID" id="6802481"/>
<dbReference type="KEGG" id="pmr:PMI0275"/>
<dbReference type="PATRIC" id="fig|529507.6.peg.265"/>
<dbReference type="eggNOG" id="COG1807">
    <property type="taxonomic scope" value="Bacteria"/>
</dbReference>
<dbReference type="HOGENOM" id="CLU_019200_2_1_6"/>
<dbReference type="UniPathway" id="UPA00037"/>
<dbReference type="Proteomes" id="UP000008319">
    <property type="component" value="Chromosome"/>
</dbReference>
<dbReference type="GO" id="GO:0005886">
    <property type="term" value="C:plasma membrane"/>
    <property type="evidence" value="ECO:0007669"/>
    <property type="project" value="UniProtKB-SubCell"/>
</dbReference>
<dbReference type="GO" id="GO:0103015">
    <property type="term" value="F:4-amino-4-deoxy-L-arabinose transferase activity"/>
    <property type="evidence" value="ECO:0007669"/>
    <property type="project" value="UniProtKB-EC"/>
</dbReference>
<dbReference type="GO" id="GO:0000030">
    <property type="term" value="F:mannosyltransferase activity"/>
    <property type="evidence" value="ECO:0007669"/>
    <property type="project" value="InterPro"/>
</dbReference>
<dbReference type="GO" id="GO:0009245">
    <property type="term" value="P:lipid A biosynthetic process"/>
    <property type="evidence" value="ECO:0007669"/>
    <property type="project" value="UniProtKB-UniRule"/>
</dbReference>
<dbReference type="GO" id="GO:0009103">
    <property type="term" value="P:lipopolysaccharide biosynthetic process"/>
    <property type="evidence" value="ECO:0007669"/>
    <property type="project" value="UniProtKB-KW"/>
</dbReference>
<dbReference type="GO" id="GO:0006493">
    <property type="term" value="P:protein O-linked glycosylation"/>
    <property type="evidence" value="ECO:0007669"/>
    <property type="project" value="InterPro"/>
</dbReference>
<dbReference type="GO" id="GO:0010041">
    <property type="term" value="P:response to iron(III) ion"/>
    <property type="evidence" value="ECO:0007669"/>
    <property type="project" value="TreeGrafter"/>
</dbReference>
<dbReference type="HAMAP" id="MF_01165">
    <property type="entry name" value="ArnT_transfer"/>
    <property type="match status" value="1"/>
</dbReference>
<dbReference type="InterPro" id="IPR022839">
    <property type="entry name" value="ArnT_tfrase"/>
</dbReference>
<dbReference type="InterPro" id="IPR003342">
    <property type="entry name" value="Glyco_trans_39/83"/>
</dbReference>
<dbReference type="InterPro" id="IPR050297">
    <property type="entry name" value="LipidA_mod_glycosyltrf_83"/>
</dbReference>
<dbReference type="NCBIfam" id="NF009784">
    <property type="entry name" value="PRK13279.1"/>
    <property type="match status" value="1"/>
</dbReference>
<dbReference type="PANTHER" id="PTHR33908">
    <property type="entry name" value="MANNOSYLTRANSFERASE YKCB-RELATED"/>
    <property type="match status" value="1"/>
</dbReference>
<dbReference type="PANTHER" id="PTHR33908:SF3">
    <property type="entry name" value="UNDECAPRENYL PHOSPHATE-ALPHA-4-AMINO-4-DEOXY-L-ARABINOSE ARABINOSYL TRANSFERASE"/>
    <property type="match status" value="1"/>
</dbReference>
<dbReference type="Pfam" id="PF02366">
    <property type="entry name" value="PMT"/>
    <property type="match status" value="1"/>
</dbReference>
<name>ARNT1_PROMH</name>
<reference key="1">
    <citation type="journal article" date="2008" name="J. Bacteriol.">
        <title>Complete genome sequence of uropathogenic Proteus mirabilis, a master of both adherence and motility.</title>
        <authorList>
            <person name="Pearson M.M."/>
            <person name="Sebaihia M."/>
            <person name="Churcher C."/>
            <person name="Quail M.A."/>
            <person name="Seshasayee A.S."/>
            <person name="Luscombe N.M."/>
            <person name="Abdellah Z."/>
            <person name="Arrosmith C."/>
            <person name="Atkin B."/>
            <person name="Chillingworth T."/>
            <person name="Hauser H."/>
            <person name="Jagels K."/>
            <person name="Moule S."/>
            <person name="Mungall K."/>
            <person name="Norbertczak H."/>
            <person name="Rabbinowitsch E."/>
            <person name="Walker D."/>
            <person name="Whithead S."/>
            <person name="Thomson N.R."/>
            <person name="Rather P.N."/>
            <person name="Parkhill J."/>
            <person name="Mobley H.L.T."/>
        </authorList>
    </citation>
    <scope>NUCLEOTIDE SEQUENCE [LARGE SCALE GENOMIC DNA]</scope>
    <source>
        <strain>HI4320</strain>
    </source>
</reference>
<comment type="function">
    <text evidence="1">Catalyzes the transfer of the L-Ara4N moiety of the glycolipid undecaprenyl phosphate-alpha-L-Ara4N to lipid A. The modified arabinose is attached to lipid A and is required for resistance to polymyxin and cationic antimicrobial peptides.</text>
</comment>
<comment type="catalytic activity">
    <reaction evidence="1">
        <text>4-amino-4-deoxy-alpha-L-arabinopyranosyl di-trans,octa-cis-undecaprenyl phosphate + lipid IVA = lipid IIA + di-trans,octa-cis-undecaprenyl phosphate.</text>
        <dbReference type="EC" id="2.4.2.43"/>
    </reaction>
</comment>
<comment type="pathway">
    <text evidence="1">Lipopolysaccharide metabolism; 4-amino-4-deoxy-beta-L-arabinose-lipid A biosynthesis.</text>
</comment>
<comment type="subcellular location">
    <subcellularLocation>
        <location evidence="1">Cell inner membrane</location>
        <topology evidence="1">Multi-pass membrane protein</topology>
    </subcellularLocation>
</comment>
<comment type="similarity">
    <text evidence="1">Belongs to the glycosyltransferase 83 family.</text>
</comment>